<accession>Q8BTQ0</accession>
<accession>Q8BZT0</accession>
<organism>
    <name type="scientific">Mus musculus</name>
    <name type="common">Mouse</name>
    <dbReference type="NCBI Taxonomy" id="10090"/>
    <lineage>
        <taxon>Eukaryota</taxon>
        <taxon>Metazoa</taxon>
        <taxon>Chordata</taxon>
        <taxon>Craniata</taxon>
        <taxon>Vertebrata</taxon>
        <taxon>Euteleostomi</taxon>
        <taxon>Mammalia</taxon>
        <taxon>Eutheria</taxon>
        <taxon>Euarchontoglires</taxon>
        <taxon>Glires</taxon>
        <taxon>Rodentia</taxon>
        <taxon>Myomorpha</taxon>
        <taxon>Muroidea</taxon>
        <taxon>Muridae</taxon>
        <taxon>Murinae</taxon>
        <taxon>Mus</taxon>
        <taxon>Mus</taxon>
    </lineage>
</organism>
<proteinExistence type="evidence at protein level"/>
<gene>
    <name type="primary">PcgF3</name>
    <name type="synonym">Rnf3</name>
    <name type="synonym">Rnf3a</name>
</gene>
<keyword id="KW-0025">Alternative splicing</keyword>
<keyword id="KW-0479">Metal-binding</keyword>
<keyword id="KW-0539">Nucleus</keyword>
<keyword id="KW-1185">Reference proteome</keyword>
<keyword id="KW-0678">Repressor</keyword>
<keyword id="KW-0804">Transcription</keyword>
<keyword id="KW-0805">Transcription regulation</keyword>
<keyword id="KW-0862">Zinc</keyword>
<keyword id="KW-0863">Zinc-finger</keyword>
<comment type="function">
    <text evidence="1 4">Component of a Polycomb group (PcG) multiprotein PRC1-like complex, a complex class required to maintain the transcriptionally repressive state of many genes, including Hox genes, throughout development. PcG PRC1 complex acts via chromatin remodeling and modification of histones; it mediates monoubiquitination of histone H2A 'Lys-119', rendering chromatin heritably changed in its expressibility (PubMed:28596365). Within the PRC1-like complex, regulates RNF2 ubiquitin ligase activity (By similarity). Plays a redundant role with PCGF5 as part of a PRC1-like complex that mediates monoubiquitination of histone H2A 'Lys-119' on the X chromosome and is required for normal silencing of one copy of the X chromosome in XX females (PubMed:28596365).</text>
</comment>
<comment type="subunit">
    <text evidence="1 4">Component of a PRC1-like complex that contains PCGF3, RNF2 and RYBP (PubMed:28596365). Interacts with RNF2 (PubMed:28596365). Interacts with CBX6, CBX7 and CBX8 (By similarity). Interacts with BCORL1 (By similarity).</text>
</comment>
<comment type="subcellular location">
    <subcellularLocation>
        <location evidence="4">Nucleus</location>
    </subcellularLocation>
    <subcellularLocation>
        <location evidence="4">Nucleus</location>
        <location evidence="4">Nucleoplasm</location>
    </subcellularLocation>
    <text evidence="4">Recruited by the non-coding RNA Xist to specific nuclear foci that probably correspond to the inactivated X chromosome.</text>
</comment>
<comment type="alternative products">
    <event type="alternative splicing"/>
    <isoform>
        <id>Q8BTQ0-1</id>
        <name>1</name>
        <sequence type="displayed"/>
    </isoform>
    <isoform>
        <id>Q8BTQ0-2</id>
        <name>2</name>
        <sequence type="described" ref="VSP_023116 VSP_023117"/>
    </isoform>
</comment>
<comment type="disruption phenotype">
    <text evidence="4">Combined disruption of both Pcgf3 and Pcgf5 causes embryonic lethality; there are no live progeny. Male embryos are detected at 9.5 and 10.5 dpc, but are smaller than normal. Female embryos are already extensively degraded at 9.5 dpc. Placentas from male embryos have some parietal trophoblast giant cells, but fail to form a labyrinth. Placentas from female embryos lack trophoblasts altogether and fail to form a labyrinth. Defects can be attributed to the observed lack of monoubiquitination of histone H2A 'Lys-119' and lack of Xist-mediated silencing of one copy of the X chromosome.</text>
</comment>
<sequence>MLTRKIKLWDINAHITCRLCSGYLIDATTVTECLHTFCRSCLVKYLEENNTCPTCRIVIHQSHPLQYIGHDRTMQDIVYKLVPGLQEAEMRKQREFYHKLGMEVPGDIKGEACSAKQHLDPRNGETKADDNSNKETAEEKQEEDNDYHRSDEQVSICLECNSSKLRGLKRKWIRCSAQATVLHLKKFIAKKLNLSSFNELDILCNEEILGKDHTLKFVVVTRWRFKKAPLLLHYRPKMDLL</sequence>
<name>PCGF3_MOUSE</name>
<protein>
    <recommendedName>
        <fullName>Polycomb group RING finger protein 3</fullName>
    </recommendedName>
    <alternativeName>
        <fullName>RING finger protein 3A</fullName>
    </alternativeName>
</protein>
<dbReference type="EMBL" id="AK033609">
    <property type="protein sequence ID" value="BAC28388.1"/>
    <property type="molecule type" value="mRNA"/>
</dbReference>
<dbReference type="EMBL" id="AK089091">
    <property type="protein sequence ID" value="BAC40745.1"/>
    <property type="molecule type" value="mRNA"/>
</dbReference>
<dbReference type="EMBL" id="BC049266">
    <property type="protein sequence ID" value="AAH49266.1"/>
    <property type="molecule type" value="mRNA"/>
</dbReference>
<dbReference type="CCDS" id="CCDS19512.1">
    <molecule id="Q8BTQ0-1"/>
</dbReference>
<dbReference type="RefSeq" id="NP_766304.2">
    <molecule id="Q8BTQ0-1"/>
    <property type="nucleotide sequence ID" value="NM_172716.4"/>
</dbReference>
<dbReference type="SMR" id="Q8BTQ0"/>
<dbReference type="BioGRID" id="213553">
    <property type="interactions" value="4"/>
</dbReference>
<dbReference type="FunCoup" id="Q8BTQ0">
    <property type="interactions" value="3829"/>
</dbReference>
<dbReference type="IntAct" id="Q8BTQ0">
    <property type="interactions" value="3"/>
</dbReference>
<dbReference type="MINT" id="Q8BTQ0"/>
<dbReference type="STRING" id="10090.ENSMUSP00000041790"/>
<dbReference type="PhosphoSitePlus" id="Q8BTQ0"/>
<dbReference type="PaxDb" id="10090-ENSMUSP00000041790"/>
<dbReference type="ProteomicsDB" id="287889">
    <molecule id="Q8BTQ0-1"/>
</dbReference>
<dbReference type="ProteomicsDB" id="287890">
    <molecule id="Q8BTQ0-2"/>
</dbReference>
<dbReference type="Antibodypedia" id="4972">
    <property type="antibodies" value="163 antibodies from 28 providers"/>
</dbReference>
<dbReference type="DNASU" id="69587"/>
<dbReference type="Ensembl" id="ENSMUST00000046975.12">
    <molecule id="Q8BTQ0-1"/>
    <property type="protein sequence ID" value="ENSMUSP00000041790.6"/>
    <property type="gene ID" value="ENSMUSG00000033623.14"/>
</dbReference>
<dbReference type="Ensembl" id="ENSMUST00000112597.8">
    <molecule id="Q8BTQ0-2"/>
    <property type="protein sequence ID" value="ENSMUSP00000108216.2"/>
    <property type="gene ID" value="ENSMUSG00000033623.14"/>
</dbReference>
<dbReference type="GeneID" id="69587"/>
<dbReference type="KEGG" id="mmu:69587"/>
<dbReference type="UCSC" id="uc008yod.1">
    <molecule id="Q8BTQ0-2"/>
    <property type="organism name" value="mouse"/>
</dbReference>
<dbReference type="UCSC" id="uc008yoe.1">
    <molecule id="Q8BTQ0-1"/>
    <property type="organism name" value="mouse"/>
</dbReference>
<dbReference type="AGR" id="MGI:1916837"/>
<dbReference type="CTD" id="10336"/>
<dbReference type="MGI" id="MGI:1916837">
    <property type="gene designation" value="Pcgf3"/>
</dbReference>
<dbReference type="VEuPathDB" id="HostDB:ENSMUSG00000033623"/>
<dbReference type="eggNOG" id="KOG2660">
    <property type="taxonomic scope" value="Eukaryota"/>
</dbReference>
<dbReference type="GeneTree" id="ENSGT00940000158395"/>
<dbReference type="HOGENOM" id="CLU_046427_4_3_1"/>
<dbReference type="InParanoid" id="Q8BTQ0"/>
<dbReference type="OMA" id="EHITCEI"/>
<dbReference type="OrthoDB" id="1305878at2759"/>
<dbReference type="PhylomeDB" id="Q8BTQ0"/>
<dbReference type="TreeFam" id="TF324206"/>
<dbReference type="BioGRID-ORCS" id="69587">
    <property type="hits" value="4 hits in 79 CRISPR screens"/>
</dbReference>
<dbReference type="ChiTaRS" id="Pcgf3">
    <property type="organism name" value="mouse"/>
</dbReference>
<dbReference type="PRO" id="PR:Q8BTQ0"/>
<dbReference type="Proteomes" id="UP000000589">
    <property type="component" value="Chromosome 5"/>
</dbReference>
<dbReference type="RNAct" id="Q8BTQ0">
    <property type="molecule type" value="protein"/>
</dbReference>
<dbReference type="Bgee" id="ENSMUSG00000033623">
    <property type="expression patterns" value="Expressed in superior cervical ganglion and 239 other cell types or tissues"/>
</dbReference>
<dbReference type="ExpressionAtlas" id="Q8BTQ0">
    <property type="expression patterns" value="baseline and differential"/>
</dbReference>
<dbReference type="GO" id="GO:0005654">
    <property type="term" value="C:nucleoplasm"/>
    <property type="evidence" value="ECO:0007669"/>
    <property type="project" value="UniProtKB-SubCell"/>
</dbReference>
<dbReference type="GO" id="GO:0031519">
    <property type="term" value="C:PcG protein complex"/>
    <property type="evidence" value="ECO:0000314"/>
    <property type="project" value="UniProtKB"/>
</dbReference>
<dbReference type="GO" id="GO:0140862">
    <property type="term" value="F:histone H2AK119 ubiquitin ligase activity"/>
    <property type="evidence" value="ECO:0000315"/>
    <property type="project" value="UniProtKB"/>
</dbReference>
<dbReference type="GO" id="GO:0008270">
    <property type="term" value="F:zinc ion binding"/>
    <property type="evidence" value="ECO:0007669"/>
    <property type="project" value="UniProtKB-KW"/>
</dbReference>
<dbReference type="GO" id="GO:0060816">
    <property type="term" value="P:random inactivation of X chromosome"/>
    <property type="evidence" value="ECO:0000315"/>
    <property type="project" value="UniProtKB"/>
</dbReference>
<dbReference type="CDD" id="cd17083">
    <property type="entry name" value="RAWUL_PCGF3"/>
    <property type="match status" value="1"/>
</dbReference>
<dbReference type="CDD" id="cd16735">
    <property type="entry name" value="RING-HC_PCGF3"/>
    <property type="match status" value="1"/>
</dbReference>
<dbReference type="FunFam" id="3.10.20.90:FF:000073">
    <property type="entry name" value="Polycomb group RING finger protein 3"/>
    <property type="match status" value="1"/>
</dbReference>
<dbReference type="FunFam" id="3.30.40.10:FF:000033">
    <property type="entry name" value="Polycomb group RING finger protein 3"/>
    <property type="match status" value="1"/>
</dbReference>
<dbReference type="Gene3D" id="3.10.20.90">
    <property type="entry name" value="Phosphatidylinositol 3-kinase Catalytic Subunit, Chain A, domain 1"/>
    <property type="match status" value="1"/>
</dbReference>
<dbReference type="Gene3D" id="3.30.40.10">
    <property type="entry name" value="Zinc/RING finger domain, C3HC4 (zinc finger)"/>
    <property type="match status" value="1"/>
</dbReference>
<dbReference type="InterPro" id="IPR051507">
    <property type="entry name" value="PcG_RING_finger"/>
</dbReference>
<dbReference type="InterPro" id="IPR032443">
    <property type="entry name" value="RAWUL"/>
</dbReference>
<dbReference type="InterPro" id="IPR001841">
    <property type="entry name" value="Znf_RING"/>
</dbReference>
<dbReference type="InterPro" id="IPR013083">
    <property type="entry name" value="Znf_RING/FYVE/PHD"/>
</dbReference>
<dbReference type="InterPro" id="IPR017907">
    <property type="entry name" value="Znf_RING_CS"/>
</dbReference>
<dbReference type="PANTHER" id="PTHR45893">
    <property type="entry name" value="POLYCOMB GROUP RING FINGER PROTEIN"/>
    <property type="match status" value="1"/>
</dbReference>
<dbReference type="Pfam" id="PF16207">
    <property type="entry name" value="RAWUL"/>
    <property type="match status" value="1"/>
</dbReference>
<dbReference type="Pfam" id="PF13923">
    <property type="entry name" value="zf-C3HC4_2"/>
    <property type="match status" value="1"/>
</dbReference>
<dbReference type="SMART" id="SM00184">
    <property type="entry name" value="RING"/>
    <property type="match status" value="1"/>
</dbReference>
<dbReference type="SUPFAM" id="SSF57850">
    <property type="entry name" value="RING/U-box"/>
    <property type="match status" value="1"/>
</dbReference>
<dbReference type="PROSITE" id="PS00518">
    <property type="entry name" value="ZF_RING_1"/>
    <property type="match status" value="1"/>
</dbReference>
<dbReference type="PROSITE" id="PS50089">
    <property type="entry name" value="ZF_RING_2"/>
    <property type="match status" value="1"/>
</dbReference>
<reference key="1">
    <citation type="journal article" date="2005" name="Science">
        <title>The transcriptional landscape of the mammalian genome.</title>
        <authorList>
            <person name="Carninci P."/>
            <person name="Kasukawa T."/>
            <person name="Katayama S."/>
            <person name="Gough J."/>
            <person name="Frith M.C."/>
            <person name="Maeda N."/>
            <person name="Oyama R."/>
            <person name="Ravasi T."/>
            <person name="Lenhard B."/>
            <person name="Wells C."/>
            <person name="Kodzius R."/>
            <person name="Shimokawa K."/>
            <person name="Bajic V.B."/>
            <person name="Brenner S.E."/>
            <person name="Batalov S."/>
            <person name="Forrest A.R."/>
            <person name="Zavolan M."/>
            <person name="Davis M.J."/>
            <person name="Wilming L.G."/>
            <person name="Aidinis V."/>
            <person name="Allen J.E."/>
            <person name="Ambesi-Impiombato A."/>
            <person name="Apweiler R."/>
            <person name="Aturaliya R.N."/>
            <person name="Bailey T.L."/>
            <person name="Bansal M."/>
            <person name="Baxter L."/>
            <person name="Beisel K.W."/>
            <person name="Bersano T."/>
            <person name="Bono H."/>
            <person name="Chalk A.M."/>
            <person name="Chiu K.P."/>
            <person name="Choudhary V."/>
            <person name="Christoffels A."/>
            <person name="Clutterbuck D.R."/>
            <person name="Crowe M.L."/>
            <person name="Dalla E."/>
            <person name="Dalrymple B.P."/>
            <person name="de Bono B."/>
            <person name="Della Gatta G."/>
            <person name="di Bernardo D."/>
            <person name="Down T."/>
            <person name="Engstrom P."/>
            <person name="Fagiolini M."/>
            <person name="Faulkner G."/>
            <person name="Fletcher C.F."/>
            <person name="Fukushima T."/>
            <person name="Furuno M."/>
            <person name="Futaki S."/>
            <person name="Gariboldi M."/>
            <person name="Georgii-Hemming P."/>
            <person name="Gingeras T.R."/>
            <person name="Gojobori T."/>
            <person name="Green R.E."/>
            <person name="Gustincich S."/>
            <person name="Harbers M."/>
            <person name="Hayashi Y."/>
            <person name="Hensch T.K."/>
            <person name="Hirokawa N."/>
            <person name="Hill D."/>
            <person name="Huminiecki L."/>
            <person name="Iacono M."/>
            <person name="Ikeo K."/>
            <person name="Iwama A."/>
            <person name="Ishikawa T."/>
            <person name="Jakt M."/>
            <person name="Kanapin A."/>
            <person name="Katoh M."/>
            <person name="Kawasawa Y."/>
            <person name="Kelso J."/>
            <person name="Kitamura H."/>
            <person name="Kitano H."/>
            <person name="Kollias G."/>
            <person name="Krishnan S.P."/>
            <person name="Kruger A."/>
            <person name="Kummerfeld S.K."/>
            <person name="Kurochkin I.V."/>
            <person name="Lareau L.F."/>
            <person name="Lazarevic D."/>
            <person name="Lipovich L."/>
            <person name="Liu J."/>
            <person name="Liuni S."/>
            <person name="McWilliam S."/>
            <person name="Madan Babu M."/>
            <person name="Madera M."/>
            <person name="Marchionni L."/>
            <person name="Matsuda H."/>
            <person name="Matsuzawa S."/>
            <person name="Miki H."/>
            <person name="Mignone F."/>
            <person name="Miyake S."/>
            <person name="Morris K."/>
            <person name="Mottagui-Tabar S."/>
            <person name="Mulder N."/>
            <person name="Nakano N."/>
            <person name="Nakauchi H."/>
            <person name="Ng P."/>
            <person name="Nilsson R."/>
            <person name="Nishiguchi S."/>
            <person name="Nishikawa S."/>
            <person name="Nori F."/>
            <person name="Ohara O."/>
            <person name="Okazaki Y."/>
            <person name="Orlando V."/>
            <person name="Pang K.C."/>
            <person name="Pavan W.J."/>
            <person name="Pavesi G."/>
            <person name="Pesole G."/>
            <person name="Petrovsky N."/>
            <person name="Piazza S."/>
            <person name="Reed J."/>
            <person name="Reid J.F."/>
            <person name="Ring B.Z."/>
            <person name="Ringwald M."/>
            <person name="Rost B."/>
            <person name="Ruan Y."/>
            <person name="Salzberg S.L."/>
            <person name="Sandelin A."/>
            <person name="Schneider C."/>
            <person name="Schoenbach C."/>
            <person name="Sekiguchi K."/>
            <person name="Semple C.A."/>
            <person name="Seno S."/>
            <person name="Sessa L."/>
            <person name="Sheng Y."/>
            <person name="Shibata Y."/>
            <person name="Shimada H."/>
            <person name="Shimada K."/>
            <person name="Silva D."/>
            <person name="Sinclair B."/>
            <person name="Sperling S."/>
            <person name="Stupka E."/>
            <person name="Sugiura K."/>
            <person name="Sultana R."/>
            <person name="Takenaka Y."/>
            <person name="Taki K."/>
            <person name="Tammoja K."/>
            <person name="Tan S.L."/>
            <person name="Tang S."/>
            <person name="Taylor M.S."/>
            <person name="Tegner J."/>
            <person name="Teichmann S.A."/>
            <person name="Ueda H.R."/>
            <person name="van Nimwegen E."/>
            <person name="Verardo R."/>
            <person name="Wei C.L."/>
            <person name="Yagi K."/>
            <person name="Yamanishi H."/>
            <person name="Zabarovsky E."/>
            <person name="Zhu S."/>
            <person name="Zimmer A."/>
            <person name="Hide W."/>
            <person name="Bult C."/>
            <person name="Grimmond S.M."/>
            <person name="Teasdale R.D."/>
            <person name="Liu E.T."/>
            <person name="Brusic V."/>
            <person name="Quackenbush J."/>
            <person name="Wahlestedt C."/>
            <person name="Mattick J.S."/>
            <person name="Hume D.A."/>
            <person name="Kai C."/>
            <person name="Sasaki D."/>
            <person name="Tomaru Y."/>
            <person name="Fukuda S."/>
            <person name="Kanamori-Katayama M."/>
            <person name="Suzuki M."/>
            <person name="Aoki J."/>
            <person name="Arakawa T."/>
            <person name="Iida J."/>
            <person name="Imamura K."/>
            <person name="Itoh M."/>
            <person name="Kato T."/>
            <person name="Kawaji H."/>
            <person name="Kawagashira N."/>
            <person name="Kawashima T."/>
            <person name="Kojima M."/>
            <person name="Kondo S."/>
            <person name="Konno H."/>
            <person name="Nakano K."/>
            <person name="Ninomiya N."/>
            <person name="Nishio T."/>
            <person name="Okada M."/>
            <person name="Plessy C."/>
            <person name="Shibata K."/>
            <person name="Shiraki T."/>
            <person name="Suzuki S."/>
            <person name="Tagami M."/>
            <person name="Waki K."/>
            <person name="Watahiki A."/>
            <person name="Okamura-Oho Y."/>
            <person name="Suzuki H."/>
            <person name="Kawai J."/>
            <person name="Hayashizaki Y."/>
        </authorList>
    </citation>
    <scope>NUCLEOTIDE SEQUENCE [LARGE SCALE MRNA] (ISOFORMS 1 AND 2)</scope>
    <source>
        <strain>NOD</strain>
        <tissue>Thymus</tissue>
    </source>
</reference>
<reference key="2">
    <citation type="journal article" date="2004" name="Genome Res.">
        <title>The status, quality, and expansion of the NIH full-length cDNA project: the Mammalian Gene Collection (MGC).</title>
        <authorList>
            <consortium name="The MGC Project Team"/>
        </authorList>
    </citation>
    <scope>NUCLEOTIDE SEQUENCE [LARGE SCALE MRNA] (ISOFORM 1)</scope>
    <source>
        <strain>FVB/N-3</strain>
        <tissue>Mammary tumor</tissue>
    </source>
</reference>
<reference key="3">
    <citation type="journal article" date="2017" name="Science">
        <title>PCGF3/5-PRC1 initiates Polycomb recruitment in X chromosome inactivation.</title>
        <authorList>
            <person name="Almeida M."/>
            <person name="Pintacuda G."/>
            <person name="Masui O."/>
            <person name="Koseki Y."/>
            <person name="Gdula M."/>
            <person name="Cerase A."/>
            <person name="Brown D."/>
            <person name="Mould A."/>
            <person name="Innocent C."/>
            <person name="Nakayama M."/>
            <person name="Schermelleh L."/>
            <person name="Nesterova T.B."/>
            <person name="Koseki H."/>
            <person name="Brockdorff N."/>
        </authorList>
    </citation>
    <scope>FUNCTION</scope>
    <scope>SUBCELLULAR LOCATION</scope>
    <scope>SUBUNIT</scope>
    <scope>INTERACTION WITH RNF2</scope>
    <scope>DISRUPTION PHENOTYPE</scope>
</reference>
<feature type="chain" id="PRO_0000277865" description="Polycomb group RING finger protein 3">
    <location>
        <begin position="1"/>
        <end position="241"/>
    </location>
</feature>
<feature type="zinc finger region" description="RING-type" evidence="2">
    <location>
        <begin position="17"/>
        <end position="56"/>
    </location>
</feature>
<feature type="region of interest" description="Disordered" evidence="3">
    <location>
        <begin position="115"/>
        <end position="148"/>
    </location>
</feature>
<feature type="region of interest" description="Interaction with BCORL1" evidence="1">
    <location>
        <begin position="131"/>
        <end position="241"/>
    </location>
</feature>
<feature type="compositionally biased region" description="Basic and acidic residues" evidence="3">
    <location>
        <begin position="117"/>
        <end position="139"/>
    </location>
</feature>
<feature type="splice variant" id="VSP_023116" description="In isoform 2." evidence="5">
    <original>SICLECNSSKLRGLKRKWIRCSAQ</original>
    <variation>NTRPLWIFWHQFIPCLRTSFENVT</variation>
    <location>
        <begin position="155"/>
        <end position="178"/>
    </location>
</feature>
<feature type="splice variant" id="VSP_023117" description="In isoform 2." evidence="5">
    <location>
        <begin position="179"/>
        <end position="241"/>
    </location>
</feature>
<evidence type="ECO:0000250" key="1">
    <source>
        <dbReference type="UniProtKB" id="Q3KNV8"/>
    </source>
</evidence>
<evidence type="ECO:0000255" key="2">
    <source>
        <dbReference type="PROSITE-ProRule" id="PRU00175"/>
    </source>
</evidence>
<evidence type="ECO:0000256" key="3">
    <source>
        <dbReference type="SAM" id="MobiDB-lite"/>
    </source>
</evidence>
<evidence type="ECO:0000269" key="4">
    <source>
    </source>
</evidence>
<evidence type="ECO:0000303" key="5">
    <source>
    </source>
</evidence>